<organism>
    <name type="scientific">Phenylobacterium zucineum (strain HLK1)</name>
    <dbReference type="NCBI Taxonomy" id="450851"/>
    <lineage>
        <taxon>Bacteria</taxon>
        <taxon>Pseudomonadati</taxon>
        <taxon>Pseudomonadota</taxon>
        <taxon>Alphaproteobacteria</taxon>
        <taxon>Caulobacterales</taxon>
        <taxon>Caulobacteraceae</taxon>
        <taxon>Phenylobacterium</taxon>
    </lineage>
</organism>
<gene>
    <name evidence="1" type="primary">pheS</name>
    <name type="ordered locus">PHZ_c2977</name>
</gene>
<reference key="1">
    <citation type="journal article" date="2008" name="BMC Genomics">
        <title>Complete genome of Phenylobacterium zucineum - a novel facultative intracellular bacterium isolated from human erythroleukemia cell line K562.</title>
        <authorList>
            <person name="Luo Y."/>
            <person name="Xu X."/>
            <person name="Ding Z."/>
            <person name="Liu Z."/>
            <person name="Zhang B."/>
            <person name="Yan Z."/>
            <person name="Sun J."/>
            <person name="Hu S."/>
            <person name="Hu X."/>
        </authorList>
    </citation>
    <scope>NUCLEOTIDE SEQUENCE [LARGE SCALE GENOMIC DNA]</scope>
    <source>
        <strain>HLK1</strain>
    </source>
</reference>
<keyword id="KW-0030">Aminoacyl-tRNA synthetase</keyword>
<keyword id="KW-0067">ATP-binding</keyword>
<keyword id="KW-0963">Cytoplasm</keyword>
<keyword id="KW-0436">Ligase</keyword>
<keyword id="KW-0460">Magnesium</keyword>
<keyword id="KW-0479">Metal-binding</keyword>
<keyword id="KW-0547">Nucleotide-binding</keyword>
<keyword id="KW-0648">Protein biosynthesis</keyword>
<keyword id="KW-1185">Reference proteome</keyword>
<evidence type="ECO:0000255" key="1">
    <source>
        <dbReference type="HAMAP-Rule" id="MF_00281"/>
    </source>
</evidence>
<sequence>MTDLTQLQAGLIGRIEAAADVAALEAIRVEALGKSGSISEMLKGLGKMSPDERREQGPKINGLRDAVATAIAEKKAALEAAELDRKLAAERVDLTLPPPPERRGRVHPTMQVLDEMIAVFAEMGFGLAEGPDIEDDFHNFTALNFPPKHPAREMHDTFWLPQNEAGERKLLRTHTSPVQVRVMRGTNEKLPAWIANGQAPPIRVIVPGRVYRSDSDATHTPMFHQLEGLVIDRNIHMGHLKWTLETFTRRFFEAEGVVTRFRPHHFPFTEPSCEMDVQCDRSGGSVKIGQGSDWLEILGGGMVHPNVLRNCGLDPDEWQGFAFGLGVDRLGMLKYGMPDLRDMFGSDVRWLEHWGFSAFQAPNPATGLS</sequence>
<name>SYFA_PHEZH</name>
<protein>
    <recommendedName>
        <fullName evidence="1">Phenylalanine--tRNA ligase alpha subunit</fullName>
        <ecNumber evidence="1">6.1.1.20</ecNumber>
    </recommendedName>
    <alternativeName>
        <fullName evidence="1">Phenylalanyl-tRNA synthetase alpha subunit</fullName>
        <shortName evidence="1">PheRS</shortName>
    </alternativeName>
</protein>
<feature type="chain" id="PRO_1000114898" description="Phenylalanine--tRNA ligase alpha subunit">
    <location>
        <begin position="1"/>
        <end position="369"/>
    </location>
</feature>
<feature type="binding site" evidence="1">
    <location>
        <position position="270"/>
    </location>
    <ligand>
        <name>Mg(2+)</name>
        <dbReference type="ChEBI" id="CHEBI:18420"/>
        <note>shared with beta subunit</note>
    </ligand>
</feature>
<dbReference type="EC" id="6.1.1.20" evidence="1"/>
<dbReference type="EMBL" id="CP000747">
    <property type="protein sequence ID" value="ACG79386.1"/>
    <property type="molecule type" value="Genomic_DNA"/>
</dbReference>
<dbReference type="RefSeq" id="WP_012523524.1">
    <property type="nucleotide sequence ID" value="NC_011144.1"/>
</dbReference>
<dbReference type="SMR" id="B4R9C6"/>
<dbReference type="STRING" id="450851.PHZ_c2977"/>
<dbReference type="KEGG" id="pzu:PHZ_c2977"/>
<dbReference type="eggNOG" id="COG0016">
    <property type="taxonomic scope" value="Bacteria"/>
</dbReference>
<dbReference type="HOGENOM" id="CLU_025086_0_1_5"/>
<dbReference type="OrthoDB" id="9800719at2"/>
<dbReference type="Proteomes" id="UP000001868">
    <property type="component" value="Chromosome"/>
</dbReference>
<dbReference type="GO" id="GO:0005737">
    <property type="term" value="C:cytoplasm"/>
    <property type="evidence" value="ECO:0007669"/>
    <property type="project" value="UniProtKB-SubCell"/>
</dbReference>
<dbReference type="GO" id="GO:0005524">
    <property type="term" value="F:ATP binding"/>
    <property type="evidence" value="ECO:0007669"/>
    <property type="project" value="UniProtKB-UniRule"/>
</dbReference>
<dbReference type="GO" id="GO:0000287">
    <property type="term" value="F:magnesium ion binding"/>
    <property type="evidence" value="ECO:0007669"/>
    <property type="project" value="UniProtKB-UniRule"/>
</dbReference>
<dbReference type="GO" id="GO:0004826">
    <property type="term" value="F:phenylalanine-tRNA ligase activity"/>
    <property type="evidence" value="ECO:0007669"/>
    <property type="project" value="UniProtKB-UniRule"/>
</dbReference>
<dbReference type="GO" id="GO:0000049">
    <property type="term" value="F:tRNA binding"/>
    <property type="evidence" value="ECO:0007669"/>
    <property type="project" value="InterPro"/>
</dbReference>
<dbReference type="GO" id="GO:0006432">
    <property type="term" value="P:phenylalanyl-tRNA aminoacylation"/>
    <property type="evidence" value="ECO:0007669"/>
    <property type="project" value="UniProtKB-UniRule"/>
</dbReference>
<dbReference type="CDD" id="cd00496">
    <property type="entry name" value="PheRS_alpha_core"/>
    <property type="match status" value="1"/>
</dbReference>
<dbReference type="Gene3D" id="3.30.930.10">
    <property type="entry name" value="Bira Bifunctional Protein, Domain 2"/>
    <property type="match status" value="1"/>
</dbReference>
<dbReference type="HAMAP" id="MF_00281">
    <property type="entry name" value="Phe_tRNA_synth_alpha1"/>
    <property type="match status" value="1"/>
</dbReference>
<dbReference type="InterPro" id="IPR006195">
    <property type="entry name" value="aa-tRNA-synth_II"/>
</dbReference>
<dbReference type="InterPro" id="IPR045864">
    <property type="entry name" value="aa-tRNA-synth_II/BPL/LPL"/>
</dbReference>
<dbReference type="InterPro" id="IPR004529">
    <property type="entry name" value="Phe-tRNA-synth_IIc_asu"/>
</dbReference>
<dbReference type="InterPro" id="IPR004188">
    <property type="entry name" value="Phe-tRNA_ligase_II_N"/>
</dbReference>
<dbReference type="InterPro" id="IPR022911">
    <property type="entry name" value="Phe_tRNA_ligase_alpha1_bac"/>
</dbReference>
<dbReference type="InterPro" id="IPR002319">
    <property type="entry name" value="Phenylalanyl-tRNA_Synthase"/>
</dbReference>
<dbReference type="InterPro" id="IPR010978">
    <property type="entry name" value="tRNA-bd_arm"/>
</dbReference>
<dbReference type="NCBIfam" id="TIGR00468">
    <property type="entry name" value="pheS"/>
    <property type="match status" value="1"/>
</dbReference>
<dbReference type="PANTHER" id="PTHR11538:SF41">
    <property type="entry name" value="PHENYLALANINE--TRNA LIGASE, MITOCHONDRIAL"/>
    <property type="match status" value="1"/>
</dbReference>
<dbReference type="PANTHER" id="PTHR11538">
    <property type="entry name" value="PHENYLALANYL-TRNA SYNTHETASE"/>
    <property type="match status" value="1"/>
</dbReference>
<dbReference type="Pfam" id="PF02912">
    <property type="entry name" value="Phe_tRNA-synt_N"/>
    <property type="match status" value="1"/>
</dbReference>
<dbReference type="Pfam" id="PF01409">
    <property type="entry name" value="tRNA-synt_2d"/>
    <property type="match status" value="1"/>
</dbReference>
<dbReference type="SUPFAM" id="SSF55681">
    <property type="entry name" value="Class II aaRS and biotin synthetases"/>
    <property type="match status" value="1"/>
</dbReference>
<dbReference type="SUPFAM" id="SSF46589">
    <property type="entry name" value="tRNA-binding arm"/>
    <property type="match status" value="1"/>
</dbReference>
<dbReference type="PROSITE" id="PS50862">
    <property type="entry name" value="AA_TRNA_LIGASE_II"/>
    <property type="match status" value="1"/>
</dbReference>
<comment type="catalytic activity">
    <reaction evidence="1">
        <text>tRNA(Phe) + L-phenylalanine + ATP = L-phenylalanyl-tRNA(Phe) + AMP + diphosphate + H(+)</text>
        <dbReference type="Rhea" id="RHEA:19413"/>
        <dbReference type="Rhea" id="RHEA-COMP:9668"/>
        <dbReference type="Rhea" id="RHEA-COMP:9699"/>
        <dbReference type="ChEBI" id="CHEBI:15378"/>
        <dbReference type="ChEBI" id="CHEBI:30616"/>
        <dbReference type="ChEBI" id="CHEBI:33019"/>
        <dbReference type="ChEBI" id="CHEBI:58095"/>
        <dbReference type="ChEBI" id="CHEBI:78442"/>
        <dbReference type="ChEBI" id="CHEBI:78531"/>
        <dbReference type="ChEBI" id="CHEBI:456215"/>
        <dbReference type="EC" id="6.1.1.20"/>
    </reaction>
</comment>
<comment type="cofactor">
    <cofactor evidence="1">
        <name>Mg(2+)</name>
        <dbReference type="ChEBI" id="CHEBI:18420"/>
    </cofactor>
    <text evidence="1">Binds 2 magnesium ions per tetramer.</text>
</comment>
<comment type="subunit">
    <text evidence="1">Tetramer of two alpha and two beta subunits.</text>
</comment>
<comment type="subcellular location">
    <subcellularLocation>
        <location evidence="1">Cytoplasm</location>
    </subcellularLocation>
</comment>
<comment type="similarity">
    <text evidence="1">Belongs to the class-II aminoacyl-tRNA synthetase family. Phe-tRNA synthetase alpha subunit type 1 subfamily.</text>
</comment>
<accession>B4R9C6</accession>
<proteinExistence type="inferred from homology"/>